<evidence type="ECO:0000255" key="1">
    <source>
        <dbReference type="HAMAP-Rule" id="MF_00911"/>
    </source>
</evidence>
<evidence type="ECO:0000255" key="2">
    <source>
        <dbReference type="PROSITE-ProRule" id="PRU01115"/>
    </source>
</evidence>
<evidence type="ECO:0000256" key="3">
    <source>
        <dbReference type="SAM" id="MobiDB-lite"/>
    </source>
</evidence>
<sequence length="316" mass="35380">MAKAARRTKSAPARRSPRRHARQTGATIRRPKRPIKSNETIALPKWLGFLSHPLLKQMAKRLLLILVIVGFLAGLWAARWPQLLATKTGEYLGRQGFSVRHVEIVGLHHMDRQAIYDIASTQQNLAMPLVDLNAIRDRLLRFGWIEDARVSRRWPDTLVVDIVERNPAAVWQYHGHLRLVDNNGIIISDVDPHASPDLPLVIGAGANLHLEDLGHLLEAAPSLKPMIDAASWIGNRRWDLHFASGETLSLPEGNEAEAALVRFSHINREHHLLERGYVKFDMRVPGAPITARISPEPVKKATKPAKAADPLVSDRI</sequence>
<name>FTSQ_ZYMMO</name>
<comment type="function">
    <text evidence="1">Essential cell division protein.</text>
</comment>
<comment type="subcellular location">
    <subcellularLocation>
        <location evidence="1">Cell inner membrane</location>
        <topology evidence="1">Single-pass type II membrane protein</topology>
    </subcellularLocation>
    <text evidence="1">Localizes to the division septum.</text>
</comment>
<comment type="similarity">
    <text evidence="1">Belongs to the FtsQ/DivIB family. FtsQ subfamily.</text>
</comment>
<gene>
    <name evidence="1" type="primary">ftsQ</name>
    <name type="ordered locus">ZMO0835</name>
</gene>
<accession>D2YW26</accession>
<keyword id="KW-0131">Cell cycle</keyword>
<keyword id="KW-0132">Cell division</keyword>
<keyword id="KW-0997">Cell inner membrane</keyword>
<keyword id="KW-1003">Cell membrane</keyword>
<keyword id="KW-0472">Membrane</keyword>
<keyword id="KW-1185">Reference proteome</keyword>
<keyword id="KW-0812">Transmembrane</keyword>
<keyword id="KW-1133">Transmembrane helix</keyword>
<organism>
    <name type="scientific">Zymomonas mobilis subsp. mobilis (strain ATCC 31821 / ZM4 / CP4)</name>
    <dbReference type="NCBI Taxonomy" id="264203"/>
    <lineage>
        <taxon>Bacteria</taxon>
        <taxon>Pseudomonadati</taxon>
        <taxon>Pseudomonadota</taxon>
        <taxon>Alphaproteobacteria</taxon>
        <taxon>Sphingomonadales</taxon>
        <taxon>Zymomonadaceae</taxon>
        <taxon>Zymomonas</taxon>
    </lineage>
</organism>
<reference key="1">
    <citation type="journal article" date="2005" name="Nat. Biotechnol.">
        <title>The genome sequence of the ethanologenic bacterium Zymomonas mobilis ZM4.</title>
        <authorList>
            <person name="Seo J.-S."/>
            <person name="Chong H."/>
            <person name="Park H.S."/>
            <person name="Yoon K.-O."/>
            <person name="Jung C."/>
            <person name="Kim J.J."/>
            <person name="Hong J.H."/>
            <person name="Kim H."/>
            <person name="Kim J.-H."/>
            <person name="Kil J.-I."/>
            <person name="Park C.J."/>
            <person name="Oh H.-M."/>
            <person name="Lee J.-S."/>
            <person name="Jin S.-J."/>
            <person name="Um H.-W."/>
            <person name="Lee H.-J."/>
            <person name="Oh S.-J."/>
            <person name="Kim J.Y."/>
            <person name="Kang H.L."/>
            <person name="Lee S.Y."/>
            <person name="Lee K.J."/>
            <person name="Kang H.S."/>
        </authorList>
    </citation>
    <scope>NUCLEOTIDE SEQUENCE [LARGE SCALE GENOMIC DNA]</scope>
    <source>
        <strain>ATCC 31821 / ZM4 / CP4</strain>
    </source>
</reference>
<protein>
    <recommendedName>
        <fullName evidence="1">Cell division protein FtsQ</fullName>
    </recommendedName>
</protein>
<dbReference type="EMBL" id="AE008692">
    <property type="protein sequence ID" value="AAV89459.2"/>
    <property type="molecule type" value="Genomic_DNA"/>
</dbReference>
<dbReference type="RefSeq" id="WP_011240705.1">
    <property type="nucleotide sequence ID" value="NZ_CP035711.1"/>
</dbReference>
<dbReference type="SMR" id="D2YW26"/>
<dbReference type="STRING" id="264203.ZMO0835"/>
<dbReference type="KEGG" id="zmo:ZMO0835"/>
<dbReference type="eggNOG" id="COG1589">
    <property type="taxonomic scope" value="Bacteria"/>
</dbReference>
<dbReference type="HOGENOM" id="CLU_061141_1_0_5"/>
<dbReference type="Proteomes" id="UP000001173">
    <property type="component" value="Chromosome"/>
</dbReference>
<dbReference type="GO" id="GO:0032153">
    <property type="term" value="C:cell division site"/>
    <property type="evidence" value="ECO:0007669"/>
    <property type="project" value="UniProtKB-UniRule"/>
</dbReference>
<dbReference type="GO" id="GO:0005886">
    <property type="term" value="C:plasma membrane"/>
    <property type="evidence" value="ECO:0007669"/>
    <property type="project" value="UniProtKB-SubCell"/>
</dbReference>
<dbReference type="GO" id="GO:0090529">
    <property type="term" value="P:cell septum assembly"/>
    <property type="evidence" value="ECO:0007669"/>
    <property type="project" value="InterPro"/>
</dbReference>
<dbReference type="GO" id="GO:0043093">
    <property type="term" value="P:FtsZ-dependent cytokinesis"/>
    <property type="evidence" value="ECO:0007669"/>
    <property type="project" value="UniProtKB-UniRule"/>
</dbReference>
<dbReference type="Gene3D" id="3.10.20.310">
    <property type="entry name" value="membrane protein fhac"/>
    <property type="match status" value="1"/>
</dbReference>
<dbReference type="HAMAP" id="MF_00911">
    <property type="entry name" value="FtsQ_subfam"/>
    <property type="match status" value="1"/>
</dbReference>
<dbReference type="InterPro" id="IPR005548">
    <property type="entry name" value="Cell_div_FtsQ/DivIB_C"/>
</dbReference>
<dbReference type="InterPro" id="IPR026579">
    <property type="entry name" value="FtsQ"/>
</dbReference>
<dbReference type="InterPro" id="IPR034746">
    <property type="entry name" value="POTRA"/>
</dbReference>
<dbReference type="InterPro" id="IPR013685">
    <property type="entry name" value="POTRA_FtsQ_type"/>
</dbReference>
<dbReference type="PANTHER" id="PTHR35851">
    <property type="entry name" value="CELL DIVISION PROTEIN FTSQ"/>
    <property type="match status" value="1"/>
</dbReference>
<dbReference type="PANTHER" id="PTHR35851:SF1">
    <property type="entry name" value="CELL DIVISION PROTEIN FTSQ"/>
    <property type="match status" value="1"/>
</dbReference>
<dbReference type="Pfam" id="PF03799">
    <property type="entry name" value="FtsQ_DivIB_C"/>
    <property type="match status" value="1"/>
</dbReference>
<dbReference type="Pfam" id="PF08478">
    <property type="entry name" value="POTRA_1"/>
    <property type="match status" value="1"/>
</dbReference>
<dbReference type="PROSITE" id="PS51779">
    <property type="entry name" value="POTRA"/>
    <property type="match status" value="1"/>
</dbReference>
<proteinExistence type="inferred from homology"/>
<feature type="chain" id="PRO_0000414704" description="Cell division protein FtsQ">
    <location>
        <begin position="1"/>
        <end position="316"/>
    </location>
</feature>
<feature type="topological domain" description="Cytoplasmic" evidence="1">
    <location>
        <begin position="1"/>
        <end position="61"/>
    </location>
</feature>
<feature type="transmembrane region" description="Helical" evidence="1">
    <location>
        <begin position="62"/>
        <end position="80"/>
    </location>
</feature>
<feature type="topological domain" description="Periplasmic" evidence="1">
    <location>
        <begin position="81"/>
        <end position="316"/>
    </location>
</feature>
<feature type="domain" description="POTRA" evidence="2">
    <location>
        <begin position="97"/>
        <end position="165"/>
    </location>
</feature>
<feature type="region of interest" description="Disordered" evidence="3">
    <location>
        <begin position="1"/>
        <end position="34"/>
    </location>
</feature>
<feature type="region of interest" description="Disordered" evidence="3">
    <location>
        <begin position="295"/>
        <end position="316"/>
    </location>
</feature>